<accession>A0A140JWT2</accession>
<gene>
    <name evidence="4" type="primary">ptmB</name>
</gene>
<keyword id="KW-0325">Glycoprotein</keyword>
<keyword id="KW-0456">Lyase</keyword>
<keyword id="KW-0472">Membrane</keyword>
<keyword id="KW-0812">Transmembrane</keyword>
<keyword id="KW-1133">Transmembrane helix</keyword>
<dbReference type="EC" id="4.2.3.-" evidence="3"/>
<dbReference type="EMBL" id="LC027936">
    <property type="protein sequence ID" value="BAU61559.1"/>
    <property type="molecule type" value="Genomic_DNA"/>
</dbReference>
<dbReference type="GlyCosmos" id="A0A140JWT2">
    <property type="glycosylation" value="1 site, No reported glycans"/>
</dbReference>
<dbReference type="GO" id="GO:0016020">
    <property type="term" value="C:membrane"/>
    <property type="evidence" value="ECO:0007669"/>
    <property type="project" value="UniProtKB-SubCell"/>
</dbReference>
<dbReference type="GO" id="GO:0016829">
    <property type="term" value="F:lyase activity"/>
    <property type="evidence" value="ECO:0007669"/>
    <property type="project" value="UniProtKB-KW"/>
</dbReference>
<dbReference type="InterPro" id="IPR039020">
    <property type="entry name" value="PaxB-like"/>
</dbReference>
<dbReference type="PANTHER" id="PTHR42038">
    <property type="match status" value="1"/>
</dbReference>
<dbReference type="PANTHER" id="PTHR42038:SF2">
    <property type="entry name" value="TERPENE CYCLASE AUSL"/>
    <property type="match status" value="1"/>
</dbReference>
<dbReference type="Pfam" id="PF25129">
    <property type="entry name" value="Pyr4-TMTC"/>
    <property type="match status" value="1"/>
</dbReference>
<feature type="chain" id="PRO_0000446546" description="Terpene cyclase ptmB">
    <location>
        <begin position="1"/>
        <end position="243"/>
    </location>
</feature>
<feature type="transmembrane region" description="Helical" evidence="1">
    <location>
        <begin position="19"/>
        <end position="39"/>
    </location>
</feature>
<feature type="transmembrane region" description="Helical" evidence="1">
    <location>
        <begin position="48"/>
        <end position="68"/>
    </location>
</feature>
<feature type="transmembrane region" description="Helical" evidence="1">
    <location>
        <begin position="78"/>
        <end position="98"/>
    </location>
</feature>
<feature type="transmembrane region" description="Helical" evidence="1">
    <location>
        <begin position="112"/>
        <end position="132"/>
    </location>
</feature>
<feature type="transmembrane region" description="Helical" evidence="1">
    <location>
        <begin position="137"/>
        <end position="157"/>
    </location>
</feature>
<feature type="transmembrane region" description="Helical" evidence="1">
    <location>
        <begin position="172"/>
        <end position="194"/>
    </location>
</feature>
<feature type="transmembrane region" description="Helical" evidence="1">
    <location>
        <begin position="205"/>
        <end position="225"/>
    </location>
</feature>
<feature type="glycosylation site" description="N-linked (GlcNAc...) asparagine" evidence="2">
    <location>
        <position position="111"/>
    </location>
</feature>
<sequence>MDGFDVSQAPPEYRSVEPIANLFVLGMGLGWLINYVGMIYQSFKDETYGMAIMPLCCNIAWEIVYSLIYPSKSLTEQGVFIAGLTINIGVMYAAIKFAPKEWSHAPLVMRNLSLIFFLATLGFLTGHLALAAEIGHSLAYSWGAVVCQLLLSVGGLCQLLCRGCTRGASYTLWLSRFLGSSCTVGFASLRWMYWPESFSWLNSPLVLWSLALFLTVDGSYGICYWYVRQYELSLKEAEGRKSK</sequence>
<organism>
    <name type="scientific">Penicillium ochrochloron</name>
    <dbReference type="NCBI Taxonomy" id="69780"/>
    <lineage>
        <taxon>Eukaryota</taxon>
        <taxon>Fungi</taxon>
        <taxon>Dikarya</taxon>
        <taxon>Ascomycota</taxon>
        <taxon>Pezizomycotina</taxon>
        <taxon>Eurotiomycetes</taxon>
        <taxon>Eurotiomycetidae</taxon>
        <taxon>Eurotiales</taxon>
        <taxon>Aspergillaceae</taxon>
        <taxon>Penicillium</taxon>
    </lineage>
</organism>
<reference key="1">
    <citation type="journal article" date="2015" name="Angew. Chem. Int. Ed.">
        <title>Reconstitution of biosynthetic machinery for the synthesis of the highly elaborated indole diterpene penitrem.</title>
        <authorList>
            <person name="Liu C."/>
            <person name="Tagami K."/>
            <person name="Minami A."/>
            <person name="Matsumoto T."/>
            <person name="Frisvad J.C."/>
            <person name="Suzuki H."/>
            <person name="Ishikawa J."/>
            <person name="Gomi K."/>
            <person name="Oikawa H."/>
        </authorList>
    </citation>
    <scope>NUCLEOTIDE SEQUENCE [GENOMIC DNA]</scope>
    <scope>IDENTIFICATION</scope>
    <scope>FUNCTION</scope>
    <scope>CATALYTIC ACTIVITY</scope>
    <scope>PATHWAY</scope>
    <source>
        <strain>ATCC 90288 / AK-40</strain>
    </source>
</reference>
<name>PTMB_PENOH</name>
<protein>
    <recommendedName>
        <fullName evidence="4">Terpene cyclase ptmB</fullName>
        <ecNumber evidence="3">4.2.3.-</ecNumber>
    </recommendedName>
    <alternativeName>
        <fullName evidence="4">Penitrem biosynthesis cluster 1 protein B</fullName>
    </alternativeName>
</protein>
<comment type="function">
    <text evidence="3">Terpene cyclase; part of the gene cluster that mediates the biosynthesis of the indole diterpenes penitrems (PubMed:25831977). The geranylgeranyl diphosphate (GGPP) synthase ptmG catalyzes the first step in penitrem biosynthesis via conversion of farnesyl pyrophosphate and isopentyl pyrophosphate into geranylgeranyl pyrophosphate (GGPP) (PubMed:25831977). Condensation of indole-3-glycerol phosphate with GGPP by the prenyl transferase ptmC then forms 3-geranylgeranylindole (3-GGI) (PubMed:25831977). Epoxidation by the FAD-dependent monooxygenase ptmM leads to a epoxidized-GGI that is substrate of the terpene cyclase ptmB for cyclization to yield paspaline (PubMed:25831977). Paspaline is subsequently converted to 13-desoxypaxilline by the cytochrome P450 monooxygenase ptmP, the latter being then converted to paxilline by the cytochrome P450 monooxygenase ptmQ (PubMed:25831977). Paxilline is converted to beta-paxitriol via C-10 ketoreduction by the short-chain dehydrogenase ptmH which can be monoprenylated at the C-20 by the indole diterpene prenyltransferase ptmD (PubMed:25831977). A two-step elimination (acetylation and elimination) process performed by the O-acetyltransferase ptmV and ptmI leads to the production of the prenylated form of penijanthine (PubMed:25831977). The FAD-linked oxidoreductase ptmO then converts the prenylated form of penijanthine into PC-M5 which is in turn transformed into PC-M4 by the aromatic dimethylallyltransferase ptmE (PubMed:25831977). Five sequential oxidative transformations performed by the cytochrome P450 monooxygenases ptmK, ptmU, ptmL, ptmN and ptmJ yield the various penitrem compounds. PtmK, ptmU and ptmM are involved in the formation of the key bicyclic ring of penitrem C via the formation of the intermediates secopenitrem D and penitrem D. PtmL catalyzes the epoxidation of penitrem D and C to yield penitrem B and F, respectively. PtmJ catalyzes the last benzylic hydroxylation to convert penitrem B to prenitrem E and penitrem F to penitrem A (PubMed:25831977).</text>
</comment>
<comment type="pathway">
    <text evidence="3">Secondary metabolite biosynthesis.</text>
</comment>
<comment type="subcellular location">
    <subcellularLocation>
        <location evidence="1">Membrane</location>
        <topology evidence="1">Multi-pass membrane protein</topology>
    </subcellularLocation>
</comment>
<comment type="similarity">
    <text evidence="5">Belongs to the paxB family.</text>
</comment>
<proteinExistence type="evidence at protein level"/>
<evidence type="ECO:0000255" key="1"/>
<evidence type="ECO:0000255" key="2">
    <source>
        <dbReference type="PROSITE-ProRule" id="PRU00498"/>
    </source>
</evidence>
<evidence type="ECO:0000269" key="3">
    <source>
    </source>
</evidence>
<evidence type="ECO:0000303" key="4">
    <source>
    </source>
</evidence>
<evidence type="ECO:0000305" key="5"/>